<organism>
    <name type="scientific">Drosophila willistoni</name>
    <name type="common">Fruit fly</name>
    <dbReference type="NCBI Taxonomy" id="7260"/>
    <lineage>
        <taxon>Eukaryota</taxon>
        <taxon>Metazoa</taxon>
        <taxon>Ecdysozoa</taxon>
        <taxon>Arthropoda</taxon>
        <taxon>Hexapoda</taxon>
        <taxon>Insecta</taxon>
        <taxon>Pterygota</taxon>
        <taxon>Neoptera</taxon>
        <taxon>Endopterygota</taxon>
        <taxon>Diptera</taxon>
        <taxon>Brachycera</taxon>
        <taxon>Muscomorpha</taxon>
        <taxon>Ephydroidea</taxon>
        <taxon>Drosophilidae</taxon>
        <taxon>Drosophila</taxon>
        <taxon>Sophophora</taxon>
    </lineage>
</organism>
<keyword id="KW-0130">Cell adhesion</keyword>
<keyword id="KW-1003">Cell membrane</keyword>
<keyword id="KW-1015">Disulfide bond</keyword>
<keyword id="KW-0325">Glycoprotein</keyword>
<keyword id="KW-0393">Immunoglobulin domain</keyword>
<keyword id="KW-0472">Membrane</keyword>
<keyword id="KW-0524">Neurogenesis</keyword>
<keyword id="KW-0597">Phosphoprotein</keyword>
<keyword id="KW-0675">Receptor</keyword>
<keyword id="KW-1185">Reference proteome</keyword>
<keyword id="KW-0677">Repeat</keyword>
<keyword id="KW-0732">Signal</keyword>
<keyword id="KW-0812">Transmembrane</keyword>
<keyword id="KW-1133">Transmembrane helix</keyword>
<name>PTK7_DROWI</name>
<dbReference type="EMBL" id="CH963849">
    <property type="protein sequence ID" value="EDW74567.1"/>
    <property type="molecule type" value="Genomic_DNA"/>
</dbReference>
<dbReference type="RefSeq" id="XP_002063581.2">
    <property type="nucleotide sequence ID" value="XM_002063545.2"/>
</dbReference>
<dbReference type="SMR" id="B4MR28"/>
<dbReference type="STRING" id="7260.B4MR28"/>
<dbReference type="GlyCosmos" id="B4MR28">
    <property type="glycosylation" value="8 sites, No reported glycans"/>
</dbReference>
<dbReference type="EnsemblMetazoa" id="FBtr0415618">
    <property type="protein sequence ID" value="FBpp0373824"/>
    <property type="gene ID" value="FBgn0223968"/>
</dbReference>
<dbReference type="EnsemblMetazoa" id="XM_023182116.2">
    <property type="protein sequence ID" value="XP_023037884.1"/>
    <property type="gene ID" value="LOC6639945"/>
</dbReference>
<dbReference type="eggNOG" id="KOG1026">
    <property type="taxonomic scope" value="Eukaryota"/>
</dbReference>
<dbReference type="eggNOG" id="KOG4475">
    <property type="taxonomic scope" value="Eukaryota"/>
</dbReference>
<dbReference type="HOGENOM" id="CLU_012268_0_0_1"/>
<dbReference type="OMA" id="SHLHIEA"/>
<dbReference type="OrthoDB" id="2413561at2759"/>
<dbReference type="PhylomeDB" id="B4MR28"/>
<dbReference type="ChiTaRS" id="otk">
    <property type="organism name" value="fly"/>
</dbReference>
<dbReference type="Proteomes" id="UP000007798">
    <property type="component" value="Unassembled WGS sequence"/>
</dbReference>
<dbReference type="GO" id="GO:0030424">
    <property type="term" value="C:axon"/>
    <property type="evidence" value="ECO:0007669"/>
    <property type="project" value="EnsemblMetazoa"/>
</dbReference>
<dbReference type="GO" id="GO:0005886">
    <property type="term" value="C:plasma membrane"/>
    <property type="evidence" value="ECO:0000250"/>
    <property type="project" value="UniProtKB"/>
</dbReference>
<dbReference type="GO" id="GO:0043235">
    <property type="term" value="C:receptor complex"/>
    <property type="evidence" value="ECO:0007669"/>
    <property type="project" value="TreeGrafter"/>
</dbReference>
<dbReference type="GO" id="GO:0005524">
    <property type="term" value="F:ATP binding"/>
    <property type="evidence" value="ECO:0007669"/>
    <property type="project" value="InterPro"/>
</dbReference>
<dbReference type="GO" id="GO:0050839">
    <property type="term" value="F:cell adhesion molecule binding"/>
    <property type="evidence" value="ECO:0000250"/>
    <property type="project" value="UniProtKB"/>
</dbReference>
<dbReference type="GO" id="GO:0046982">
    <property type="term" value="F:protein heterodimerization activity"/>
    <property type="evidence" value="ECO:0007669"/>
    <property type="project" value="EnsemblMetazoa"/>
</dbReference>
<dbReference type="GO" id="GO:0042803">
    <property type="term" value="F:protein homodimerization activity"/>
    <property type="evidence" value="ECO:0007669"/>
    <property type="project" value="EnsemblMetazoa"/>
</dbReference>
<dbReference type="GO" id="GO:0004672">
    <property type="term" value="F:protein kinase activity"/>
    <property type="evidence" value="ECO:0000250"/>
    <property type="project" value="UniProtKB"/>
</dbReference>
<dbReference type="GO" id="GO:0038023">
    <property type="term" value="F:signaling receptor activity"/>
    <property type="evidence" value="ECO:0000250"/>
    <property type="project" value="UniProtKB"/>
</dbReference>
<dbReference type="GO" id="GO:0004714">
    <property type="term" value="F:transmembrane receptor protein tyrosine kinase activity"/>
    <property type="evidence" value="ECO:0007669"/>
    <property type="project" value="EnsemblMetazoa"/>
</dbReference>
<dbReference type="GO" id="GO:0017147">
    <property type="term" value="F:Wnt-protein binding"/>
    <property type="evidence" value="ECO:0007669"/>
    <property type="project" value="EnsemblMetazoa"/>
</dbReference>
<dbReference type="GO" id="GO:0007155">
    <property type="term" value="P:cell adhesion"/>
    <property type="evidence" value="ECO:0000250"/>
    <property type="project" value="UniProtKB"/>
</dbReference>
<dbReference type="GO" id="GO:0007169">
    <property type="term" value="P:cell surface receptor protein tyrosine kinase signaling pathway"/>
    <property type="evidence" value="ECO:0007669"/>
    <property type="project" value="TreeGrafter"/>
</dbReference>
<dbReference type="GO" id="GO:0048804">
    <property type="term" value="P:imaginal disc-derived female genitalia morphogenesis"/>
    <property type="evidence" value="ECO:0007669"/>
    <property type="project" value="EnsemblMetazoa"/>
</dbReference>
<dbReference type="GO" id="GO:0048803">
    <property type="term" value="P:imaginal disc-derived male genitalia morphogenesis"/>
    <property type="evidence" value="ECO:0007669"/>
    <property type="project" value="EnsemblMetazoa"/>
</dbReference>
<dbReference type="GO" id="GO:0035260">
    <property type="term" value="P:internal genitalia morphogenesis"/>
    <property type="evidence" value="ECO:0007669"/>
    <property type="project" value="EnsemblMetazoa"/>
</dbReference>
<dbReference type="GO" id="GO:0090090">
    <property type="term" value="P:negative regulation of canonical Wnt signaling pathway"/>
    <property type="evidence" value="ECO:0007669"/>
    <property type="project" value="EnsemblMetazoa"/>
</dbReference>
<dbReference type="GO" id="GO:0072499">
    <property type="term" value="P:photoreceptor cell axon guidance"/>
    <property type="evidence" value="ECO:0007669"/>
    <property type="project" value="EnsemblMetazoa"/>
</dbReference>
<dbReference type="GO" id="GO:0010976">
    <property type="term" value="P:positive regulation of neuron projection development"/>
    <property type="evidence" value="ECO:0007669"/>
    <property type="project" value="TreeGrafter"/>
</dbReference>
<dbReference type="GO" id="GO:0051897">
    <property type="term" value="P:positive regulation of phosphatidylinositol 3-kinase/protein kinase B signal transduction"/>
    <property type="evidence" value="ECO:0007669"/>
    <property type="project" value="TreeGrafter"/>
</dbReference>
<dbReference type="GO" id="GO:0031290">
    <property type="term" value="P:retinal ganglion cell axon guidance"/>
    <property type="evidence" value="ECO:0000250"/>
    <property type="project" value="UniProtKB"/>
</dbReference>
<dbReference type="CDD" id="cd00096">
    <property type="entry name" value="Ig"/>
    <property type="match status" value="2"/>
</dbReference>
<dbReference type="FunFam" id="1.10.510.10:FF:000954">
    <property type="entry name" value="Tyrosine-protein kinase-like otk"/>
    <property type="match status" value="1"/>
</dbReference>
<dbReference type="FunFam" id="2.60.40.10:FF:001805">
    <property type="entry name" value="Tyrosine-protein kinase-like otk"/>
    <property type="match status" value="1"/>
</dbReference>
<dbReference type="FunFam" id="2.60.40.10:FF:002027">
    <property type="entry name" value="Tyrosine-protein kinase-like otk"/>
    <property type="match status" value="1"/>
</dbReference>
<dbReference type="FunFam" id="2.60.40.10:FF:002086">
    <property type="entry name" value="Tyrosine-protein kinase-like otk"/>
    <property type="match status" value="1"/>
</dbReference>
<dbReference type="FunFam" id="3.30.200.20:FF:001776">
    <property type="entry name" value="Tyrosine-protein kinase-like otk"/>
    <property type="match status" value="1"/>
</dbReference>
<dbReference type="FunFam" id="2.60.40.10:FF:002127">
    <property type="entry name" value="tyrosine-protein kinase-like otk"/>
    <property type="match status" value="1"/>
</dbReference>
<dbReference type="Gene3D" id="2.60.40.10">
    <property type="entry name" value="Immunoglobulins"/>
    <property type="match status" value="5"/>
</dbReference>
<dbReference type="Gene3D" id="1.10.510.10">
    <property type="entry name" value="Transferase(Phosphotransferase) domain 1"/>
    <property type="match status" value="1"/>
</dbReference>
<dbReference type="InterPro" id="IPR007110">
    <property type="entry name" value="Ig-like_dom"/>
</dbReference>
<dbReference type="InterPro" id="IPR036179">
    <property type="entry name" value="Ig-like_dom_sf"/>
</dbReference>
<dbReference type="InterPro" id="IPR013783">
    <property type="entry name" value="Ig-like_fold"/>
</dbReference>
<dbReference type="InterPro" id="IPR013098">
    <property type="entry name" value="Ig_I-set"/>
</dbReference>
<dbReference type="InterPro" id="IPR003599">
    <property type="entry name" value="Ig_sub"/>
</dbReference>
<dbReference type="InterPro" id="IPR003598">
    <property type="entry name" value="Ig_sub2"/>
</dbReference>
<dbReference type="InterPro" id="IPR011009">
    <property type="entry name" value="Kinase-like_dom_sf"/>
</dbReference>
<dbReference type="InterPro" id="IPR000719">
    <property type="entry name" value="Prot_kinase_dom"/>
</dbReference>
<dbReference type="InterPro" id="IPR050122">
    <property type="entry name" value="RTK"/>
</dbReference>
<dbReference type="InterPro" id="IPR001245">
    <property type="entry name" value="Ser-Thr/Tyr_kinase_cat_dom"/>
</dbReference>
<dbReference type="InterPro" id="IPR008266">
    <property type="entry name" value="Tyr_kinase_AS"/>
</dbReference>
<dbReference type="InterPro" id="IPR020635">
    <property type="entry name" value="Tyr_kinase_cat_dom"/>
</dbReference>
<dbReference type="PANTHER" id="PTHR24416">
    <property type="entry name" value="TYROSINE-PROTEIN KINASE RECEPTOR"/>
    <property type="match status" value="1"/>
</dbReference>
<dbReference type="PANTHER" id="PTHR24416:SF349">
    <property type="entry name" value="TYROSINE-PROTEIN KINASE RYK"/>
    <property type="match status" value="1"/>
</dbReference>
<dbReference type="Pfam" id="PF07679">
    <property type="entry name" value="I-set"/>
    <property type="match status" value="2"/>
</dbReference>
<dbReference type="Pfam" id="PF13927">
    <property type="entry name" value="Ig_3"/>
    <property type="match status" value="2"/>
</dbReference>
<dbReference type="Pfam" id="PF07714">
    <property type="entry name" value="PK_Tyr_Ser-Thr"/>
    <property type="match status" value="1"/>
</dbReference>
<dbReference type="PRINTS" id="PR00109">
    <property type="entry name" value="TYRKINASE"/>
</dbReference>
<dbReference type="SMART" id="SM00409">
    <property type="entry name" value="IG"/>
    <property type="match status" value="5"/>
</dbReference>
<dbReference type="SMART" id="SM00408">
    <property type="entry name" value="IGc2"/>
    <property type="match status" value="5"/>
</dbReference>
<dbReference type="SMART" id="SM00219">
    <property type="entry name" value="TyrKc"/>
    <property type="match status" value="1"/>
</dbReference>
<dbReference type="SUPFAM" id="SSF48726">
    <property type="entry name" value="Immunoglobulin"/>
    <property type="match status" value="4"/>
</dbReference>
<dbReference type="SUPFAM" id="SSF56112">
    <property type="entry name" value="Protein kinase-like (PK-like)"/>
    <property type="match status" value="1"/>
</dbReference>
<dbReference type="PROSITE" id="PS50835">
    <property type="entry name" value="IG_LIKE"/>
    <property type="match status" value="5"/>
</dbReference>
<dbReference type="PROSITE" id="PS50011">
    <property type="entry name" value="PROTEIN_KINASE_DOM"/>
    <property type="match status" value="1"/>
</dbReference>
<dbReference type="PROSITE" id="PS00109">
    <property type="entry name" value="PROTEIN_KINASE_TYR"/>
    <property type="match status" value="1"/>
</dbReference>
<evidence type="ECO:0000250" key="1"/>
<evidence type="ECO:0000250" key="2">
    <source>
        <dbReference type="UniProtKB" id="Q6AWJ9"/>
    </source>
</evidence>
<evidence type="ECO:0000255" key="3"/>
<evidence type="ECO:0000255" key="4">
    <source>
        <dbReference type="PROSITE-ProRule" id="PRU00114"/>
    </source>
</evidence>
<evidence type="ECO:0000255" key="5">
    <source>
        <dbReference type="PROSITE-ProRule" id="PRU00159"/>
    </source>
</evidence>
<evidence type="ECO:0000256" key="6">
    <source>
        <dbReference type="SAM" id="MobiDB-lite"/>
    </source>
</evidence>
<evidence type="ECO:0000305" key="7"/>
<evidence type="ECO:0000312" key="8">
    <source>
        <dbReference type="EMBL" id="EDW74567.1"/>
    </source>
</evidence>
<gene>
    <name evidence="2" type="primary">otk</name>
    <name type="ORF">GK21983</name>
</gene>
<reference evidence="8" key="1">
    <citation type="journal article" date="2007" name="Nature">
        <title>Evolution of genes and genomes on the Drosophila phylogeny.</title>
        <authorList>
            <consortium name="Drosophila 12 genomes consortium"/>
        </authorList>
    </citation>
    <scope>NUCLEOTIDE SEQUENCE [LARGE SCALE GENOMIC DNA]</scope>
    <source>
        <strain evidence="8">Tucson 14030-0811.24</strain>
    </source>
</reference>
<sequence>MDMLMMWSICLFVCIFMAPFSCGSGSSSRFIQVPESQSIVENDSVDFNCEATTDPSTDLHYEWLHNGHQIVYDKRVYQIGANLHIESVQRGEDVGDYVCIAMSLSSGAREASPTAKLSVIFLDSASVQLLGSNRNELLLKCHVEGASGNEALQIEWYRNSAKLSSWQNIELDEHRLLVRQPTGSDDGLYRCIASNAAGRVMSKQGFVYQHQQQQQAGAKCLPRLKKNQKFLPESWGKQIFLCRGKRGGNVEAGLAPSPEGLRLVQGPDDQITIKEGEPATLSCLYEIPAELQNQRIQLRWRKDGKLLRQVELGASLPRGMGNPHNGHSLDGKDALLREDARLVLHKANGTLSFGTVIASDAGQYQCQLQMEGHLAINSSPGILEVIEQLKFMPQPTSKNLELDAAVAKVHCKAQGTPTPQVQWFRDGVNTTLPDQVEVDLNGTLIFRNVNADHRGNYTCLATNLQGQINATVSINVVVAPKFSVPPNVPMEIAEQSTVVIHCQAIGDPKPTIQWDKDLLYLSENNTDRQRFSFLENGTLEIRNVQAEDEGRYGCTIGNSAGLKREEAVLTVKTSSTGGGGYVTEESSGDGGFLATRAVLITMTVALAYIVLVVGLMLWCRYRRQARKARLNELSIKEAGGEQAGGEGSTSGNPKASEQEPCLGKQQRNGRNGKSKSNGDPQKSDDTACSQQSRASKKSAHIYEQLALPRSGLSELIQIGRGDFGDVFVGKLKASLVNNAQANDKDSDNDKQHSNSENGSGGSSGSTTLSTLNEKRRSKTSMDDIEEIKEEEQEQQQSQQQQQQDQLVMVKALNKVKDEQACQEFRRQLDLLRALSHKGIVRLYGLCREKDPHYLVLEYTDWGDLKQFLLATAGKVNTATTATSSTTPLPPLTTSQVLAVAYQIARGMDAIYRARFTHRDLATRNCVISSEFIVKVSYPALCKDKYSREYHKHRNSLLPIRWLAPECIQEDEYTTKSDIFSYGVVVWELFNQATKLPHEDLTNEQVIEKSQDGTLKWTVAESTPESLKEILLSCWSVNPKQRPSFSQLGAALSKAMQNSE</sequence>
<accession>B4MR28</accession>
<proteinExistence type="inferred from homology"/>
<feature type="signal peptide" evidence="3">
    <location>
        <begin position="1"/>
        <end position="23"/>
    </location>
</feature>
<feature type="chain" id="PRO_0000388693" description="Tyrosine-protein kinase-like otk" evidence="3">
    <location>
        <begin position="24"/>
        <end position="1059"/>
    </location>
</feature>
<feature type="topological domain" description="Extracellular" evidence="3">
    <location>
        <begin position="24"/>
        <end position="597"/>
    </location>
</feature>
<feature type="transmembrane region" description="Helical" evidence="3">
    <location>
        <begin position="598"/>
        <end position="618"/>
    </location>
</feature>
<feature type="topological domain" description="Cytoplasmic" evidence="3">
    <location>
        <begin position="619"/>
        <end position="1059"/>
    </location>
</feature>
<feature type="domain" description="Ig-like C2-type 1" evidence="3">
    <location>
        <begin position="28"/>
        <end position="112"/>
    </location>
</feature>
<feature type="domain" description="Ig-like C2-type 2" evidence="3">
    <location>
        <begin position="113"/>
        <end position="202"/>
    </location>
</feature>
<feature type="domain" description="Ig-like C2-type 3" evidence="3">
    <location>
        <begin position="258"/>
        <end position="377"/>
    </location>
</feature>
<feature type="domain" description="Ig-like C2-type 4" evidence="3">
    <location>
        <begin position="380"/>
        <end position="475"/>
    </location>
</feature>
<feature type="domain" description="Ig-like C2-type 5" evidence="3">
    <location>
        <begin position="480"/>
        <end position="570"/>
    </location>
</feature>
<feature type="domain" description="Protein kinase; inactive" evidence="5 7">
    <location>
        <begin position="712"/>
        <end position="1055"/>
    </location>
</feature>
<feature type="region of interest" description="Disordered" evidence="6">
    <location>
        <begin position="639"/>
        <end position="695"/>
    </location>
</feature>
<feature type="region of interest" description="Disordered" evidence="6">
    <location>
        <begin position="739"/>
        <end position="781"/>
    </location>
</feature>
<feature type="compositionally biased region" description="Polar residues" evidence="6">
    <location>
        <begin position="665"/>
        <end position="693"/>
    </location>
</feature>
<feature type="compositionally biased region" description="Basic and acidic residues" evidence="6">
    <location>
        <begin position="742"/>
        <end position="753"/>
    </location>
</feature>
<feature type="modified residue" description="Phosphoserine" evidence="2">
    <location>
        <position position="698"/>
    </location>
</feature>
<feature type="glycosylation site" description="N-linked (GlcNAc...) asparagine" evidence="3">
    <location>
        <position position="42"/>
    </location>
</feature>
<feature type="glycosylation site" description="N-linked (GlcNAc...) asparagine" evidence="3">
    <location>
        <position position="348"/>
    </location>
</feature>
<feature type="glycosylation site" description="N-linked (GlcNAc...) asparagine" evidence="3">
    <location>
        <position position="429"/>
    </location>
</feature>
<feature type="glycosylation site" description="N-linked (GlcNAc...) asparagine" evidence="3">
    <location>
        <position position="441"/>
    </location>
</feature>
<feature type="glycosylation site" description="N-linked (GlcNAc...) asparagine" evidence="3">
    <location>
        <position position="456"/>
    </location>
</feature>
<feature type="glycosylation site" description="N-linked (GlcNAc...) asparagine" evidence="3">
    <location>
        <position position="469"/>
    </location>
</feature>
<feature type="glycosylation site" description="N-linked (GlcNAc...) asparagine" evidence="3">
    <location>
        <position position="524"/>
    </location>
</feature>
<feature type="glycosylation site" description="N-linked (GlcNAc...) asparagine" evidence="3">
    <location>
        <position position="536"/>
    </location>
</feature>
<feature type="disulfide bond" evidence="4">
    <location>
        <begin position="49"/>
        <end position="99"/>
    </location>
</feature>
<feature type="disulfide bond" evidence="4">
    <location>
        <begin position="141"/>
        <end position="191"/>
    </location>
</feature>
<feature type="disulfide bond" evidence="4">
    <location>
        <begin position="283"/>
        <end position="366"/>
    </location>
</feature>
<feature type="disulfide bond" evidence="4">
    <location>
        <begin position="411"/>
        <end position="459"/>
    </location>
</feature>
<feature type="disulfide bond" evidence="4">
    <location>
        <begin position="502"/>
        <end position="554"/>
    </location>
</feature>
<comment type="function">
    <text evidence="1">Acts as a calcium-dependent, homophilic cell adhesion molecule that regulates neural recognition during the development of the nervous system. Component of the repulsive Plexin signaling response to regulate motor axon guidance at the embryonic stage. Also component of a receptor complex that is required in the adult visual system to innervate the lamina layer; specific targeting of R1-R6 axons (By similarity).</text>
</comment>
<comment type="subunit">
    <text evidence="1">Interacts with plexA; component of a receptor complex that mediates the repulsive signaling in response to Semaphorin ligands.</text>
</comment>
<comment type="subcellular location">
    <subcellularLocation>
        <location evidence="2">Cell membrane</location>
        <topology evidence="2">Single-pass type I membrane protein</topology>
    </subcellularLocation>
</comment>
<comment type="similarity">
    <text evidence="5">Belongs to the protein kinase superfamily. Tyr protein kinase family. Insulin receptor subfamily.</text>
</comment>
<comment type="caution">
    <text evidence="7">The D.melanogaster ortholog of this protein has been proposed to undergo autophosphorylation on tyrosine residues which is induced in response to cell adhesion (PubMed:1371458). However as mammalian orthologs of this protein seem to lack kinase activity it may be that this protein associates with, and is phosphorylated by, an unknown active tyrosine kinase.</text>
</comment>
<protein>
    <recommendedName>
        <fullName evidence="2">Tyrosine-protein kinase-like otk</fullName>
    </recommendedName>
    <alternativeName>
        <fullName>Tyrosine-protein kinase-like 7 homolog</fullName>
    </alternativeName>
</protein>